<gene>
    <name evidence="1" type="primary">thrS</name>
    <name type="ordered locus">Tfu_2108</name>
</gene>
<reference key="1">
    <citation type="journal article" date="2007" name="J. Bacteriol.">
        <title>Genome sequence and analysis of the soil cellulolytic actinomycete Thermobifida fusca YX.</title>
        <authorList>
            <person name="Lykidis A."/>
            <person name="Mavromatis K."/>
            <person name="Ivanova N."/>
            <person name="Anderson I."/>
            <person name="Land M."/>
            <person name="DiBartolo G."/>
            <person name="Martinez M."/>
            <person name="Lapidus A."/>
            <person name="Lucas S."/>
            <person name="Copeland A."/>
            <person name="Richardson P."/>
            <person name="Wilson D.B."/>
            <person name="Kyrpides N."/>
        </authorList>
    </citation>
    <scope>NUCLEOTIDE SEQUENCE [LARGE SCALE GENOMIC DNA]</scope>
    <source>
        <strain>YX</strain>
    </source>
</reference>
<sequence>MSAVPELRITLAGTERVVAAGTTAGQALEADGRTVIAALVNGEPRDLTHELADGDVVEEIRIDSEEGRAILRHSCAHVLAQAVQELFPEAKLGIGPPIENGFYYDFDVAEPFTPDDLKRIEKRMQEIIKQGQRFSRRAVTDEDARAELADEPYKLELIELKGGAAEAAEGAGVEVGAGQLTIYDNLHPRTGEVCWKDLCRGPHLPDTRAIPAFKLMRTAAAYWRGSEKNPQLQRIYGTAWETKDALKSYLTMLEEAAKRDHRKLGVELDLFSFPDELGSGLAVFHPKGGVVRKVMEEYSRRRHEEAGYQFVNTPHISKAGLFETSGHLPNYADAMFPPIQFEGADYYLKAMNCPMHNLIYRSRGRSYRELPLRLFEFGTVYRYEKSGVVHGLTRARGFTQDDAHIYCTKEQMPDELDRLLTFVLDLLRDYGLSDFYLELSTRDDSPKFIGEPQEWEEATEILRQAAQKQNLELVMDAGGAAYYGPKISVQAKDAIGRTWQMSTIQVDFQQPKRFELEYQAADGSRQRPVMIHRALFGSIERFFAVLLEHYAGAFPAWLAPVQVVGIPIASEHVPYLEDVARRLREHGVRVEVDASDDRMQKKIRNAQKQKIPFMLLAGDNDVSKGAVSFRYRDGSQNNGVPIDKAIEEILTVIRERRQV</sequence>
<keyword id="KW-0030">Aminoacyl-tRNA synthetase</keyword>
<keyword id="KW-0067">ATP-binding</keyword>
<keyword id="KW-0963">Cytoplasm</keyword>
<keyword id="KW-0436">Ligase</keyword>
<keyword id="KW-0479">Metal-binding</keyword>
<keyword id="KW-0547">Nucleotide-binding</keyword>
<keyword id="KW-0648">Protein biosynthesis</keyword>
<keyword id="KW-0694">RNA-binding</keyword>
<keyword id="KW-0820">tRNA-binding</keyword>
<keyword id="KW-0862">Zinc</keyword>
<proteinExistence type="inferred from homology"/>
<protein>
    <recommendedName>
        <fullName evidence="1">Threonine--tRNA ligase</fullName>
        <ecNumber evidence="1">6.1.1.3</ecNumber>
    </recommendedName>
    <alternativeName>
        <fullName evidence="1">Threonyl-tRNA synthetase</fullName>
        <shortName evidence="1">ThrRS</shortName>
    </alternativeName>
</protein>
<name>SYT_THEFY</name>
<dbReference type="EC" id="6.1.1.3" evidence="1"/>
<dbReference type="EMBL" id="CP000088">
    <property type="protein sequence ID" value="AAZ56141.1"/>
    <property type="molecule type" value="Genomic_DNA"/>
</dbReference>
<dbReference type="RefSeq" id="WP_011292531.1">
    <property type="nucleotide sequence ID" value="NC_007333.1"/>
</dbReference>
<dbReference type="SMR" id="Q47N28"/>
<dbReference type="STRING" id="269800.Tfu_2108"/>
<dbReference type="KEGG" id="tfu:Tfu_2108"/>
<dbReference type="eggNOG" id="COG0441">
    <property type="taxonomic scope" value="Bacteria"/>
</dbReference>
<dbReference type="HOGENOM" id="CLU_008554_0_1_11"/>
<dbReference type="OrthoDB" id="9802304at2"/>
<dbReference type="GO" id="GO:0005737">
    <property type="term" value="C:cytoplasm"/>
    <property type="evidence" value="ECO:0007669"/>
    <property type="project" value="UniProtKB-SubCell"/>
</dbReference>
<dbReference type="GO" id="GO:0005524">
    <property type="term" value="F:ATP binding"/>
    <property type="evidence" value="ECO:0007669"/>
    <property type="project" value="UniProtKB-UniRule"/>
</dbReference>
<dbReference type="GO" id="GO:0046872">
    <property type="term" value="F:metal ion binding"/>
    <property type="evidence" value="ECO:0007669"/>
    <property type="project" value="UniProtKB-KW"/>
</dbReference>
<dbReference type="GO" id="GO:0004829">
    <property type="term" value="F:threonine-tRNA ligase activity"/>
    <property type="evidence" value="ECO:0007669"/>
    <property type="project" value="UniProtKB-UniRule"/>
</dbReference>
<dbReference type="GO" id="GO:0000049">
    <property type="term" value="F:tRNA binding"/>
    <property type="evidence" value="ECO:0007669"/>
    <property type="project" value="UniProtKB-KW"/>
</dbReference>
<dbReference type="GO" id="GO:0006435">
    <property type="term" value="P:threonyl-tRNA aminoacylation"/>
    <property type="evidence" value="ECO:0007669"/>
    <property type="project" value="UniProtKB-UniRule"/>
</dbReference>
<dbReference type="CDD" id="cd01667">
    <property type="entry name" value="TGS_ThrRS"/>
    <property type="match status" value="1"/>
</dbReference>
<dbReference type="CDD" id="cd00860">
    <property type="entry name" value="ThrRS_anticodon"/>
    <property type="match status" value="1"/>
</dbReference>
<dbReference type="CDD" id="cd00771">
    <property type="entry name" value="ThrRS_core"/>
    <property type="match status" value="1"/>
</dbReference>
<dbReference type="FunFam" id="3.30.54.20:FF:000003">
    <property type="entry name" value="Threonine--tRNA ligase"/>
    <property type="match status" value="1"/>
</dbReference>
<dbReference type="FunFam" id="3.30.930.10:FF:000019">
    <property type="entry name" value="Threonine--tRNA ligase"/>
    <property type="match status" value="1"/>
</dbReference>
<dbReference type="FunFam" id="3.40.50.800:FF:000001">
    <property type="entry name" value="Threonine--tRNA ligase"/>
    <property type="match status" value="1"/>
</dbReference>
<dbReference type="FunFam" id="3.30.980.10:FF:000005">
    <property type="entry name" value="Threonyl-tRNA synthetase, mitochondrial"/>
    <property type="match status" value="1"/>
</dbReference>
<dbReference type="Gene3D" id="3.30.54.20">
    <property type="match status" value="1"/>
</dbReference>
<dbReference type="Gene3D" id="3.40.50.800">
    <property type="entry name" value="Anticodon-binding domain"/>
    <property type="match status" value="1"/>
</dbReference>
<dbReference type="Gene3D" id="3.30.930.10">
    <property type="entry name" value="Bira Bifunctional Protein, Domain 2"/>
    <property type="match status" value="1"/>
</dbReference>
<dbReference type="Gene3D" id="3.30.980.10">
    <property type="entry name" value="Threonyl-trna Synthetase, Chain A, domain 2"/>
    <property type="match status" value="1"/>
</dbReference>
<dbReference type="HAMAP" id="MF_00184">
    <property type="entry name" value="Thr_tRNA_synth"/>
    <property type="match status" value="1"/>
</dbReference>
<dbReference type="InterPro" id="IPR002314">
    <property type="entry name" value="aa-tRNA-synt_IIb"/>
</dbReference>
<dbReference type="InterPro" id="IPR006195">
    <property type="entry name" value="aa-tRNA-synth_II"/>
</dbReference>
<dbReference type="InterPro" id="IPR045864">
    <property type="entry name" value="aa-tRNA-synth_II/BPL/LPL"/>
</dbReference>
<dbReference type="InterPro" id="IPR004154">
    <property type="entry name" value="Anticodon-bd"/>
</dbReference>
<dbReference type="InterPro" id="IPR036621">
    <property type="entry name" value="Anticodon-bd_dom_sf"/>
</dbReference>
<dbReference type="InterPro" id="IPR004095">
    <property type="entry name" value="TGS"/>
</dbReference>
<dbReference type="InterPro" id="IPR002320">
    <property type="entry name" value="Thr-tRNA-ligase_IIa"/>
</dbReference>
<dbReference type="InterPro" id="IPR018163">
    <property type="entry name" value="Thr/Ala-tRNA-synth_IIc_edit"/>
</dbReference>
<dbReference type="InterPro" id="IPR047246">
    <property type="entry name" value="ThrRS_anticodon"/>
</dbReference>
<dbReference type="InterPro" id="IPR033728">
    <property type="entry name" value="ThrRS_core"/>
</dbReference>
<dbReference type="InterPro" id="IPR012947">
    <property type="entry name" value="tRNA_SAD"/>
</dbReference>
<dbReference type="NCBIfam" id="TIGR00418">
    <property type="entry name" value="thrS"/>
    <property type="match status" value="1"/>
</dbReference>
<dbReference type="PANTHER" id="PTHR11451:SF44">
    <property type="entry name" value="THREONINE--TRNA LIGASE, CHLOROPLASTIC_MITOCHONDRIAL 2"/>
    <property type="match status" value="1"/>
</dbReference>
<dbReference type="PANTHER" id="PTHR11451">
    <property type="entry name" value="THREONINE-TRNA LIGASE"/>
    <property type="match status" value="1"/>
</dbReference>
<dbReference type="Pfam" id="PF03129">
    <property type="entry name" value="HGTP_anticodon"/>
    <property type="match status" value="1"/>
</dbReference>
<dbReference type="Pfam" id="PF00587">
    <property type="entry name" value="tRNA-synt_2b"/>
    <property type="match status" value="1"/>
</dbReference>
<dbReference type="Pfam" id="PF07973">
    <property type="entry name" value="tRNA_SAD"/>
    <property type="match status" value="1"/>
</dbReference>
<dbReference type="PRINTS" id="PR01047">
    <property type="entry name" value="TRNASYNTHTHR"/>
</dbReference>
<dbReference type="SMART" id="SM00863">
    <property type="entry name" value="tRNA_SAD"/>
    <property type="match status" value="1"/>
</dbReference>
<dbReference type="SUPFAM" id="SSF52954">
    <property type="entry name" value="Class II aaRS ABD-related"/>
    <property type="match status" value="1"/>
</dbReference>
<dbReference type="SUPFAM" id="SSF55681">
    <property type="entry name" value="Class II aaRS and biotin synthetases"/>
    <property type="match status" value="1"/>
</dbReference>
<dbReference type="SUPFAM" id="SSF55186">
    <property type="entry name" value="ThrRS/AlaRS common domain"/>
    <property type="match status" value="1"/>
</dbReference>
<dbReference type="PROSITE" id="PS50862">
    <property type="entry name" value="AA_TRNA_LIGASE_II"/>
    <property type="match status" value="1"/>
</dbReference>
<dbReference type="PROSITE" id="PS51880">
    <property type="entry name" value="TGS"/>
    <property type="match status" value="1"/>
</dbReference>
<comment type="function">
    <text evidence="1">Catalyzes the attachment of threonine to tRNA(Thr) in a two-step reaction: L-threonine is first activated by ATP to form Thr-AMP and then transferred to the acceptor end of tRNA(Thr). Also edits incorrectly charged L-seryl-tRNA(Thr).</text>
</comment>
<comment type="catalytic activity">
    <reaction evidence="1">
        <text>tRNA(Thr) + L-threonine + ATP = L-threonyl-tRNA(Thr) + AMP + diphosphate + H(+)</text>
        <dbReference type="Rhea" id="RHEA:24624"/>
        <dbReference type="Rhea" id="RHEA-COMP:9670"/>
        <dbReference type="Rhea" id="RHEA-COMP:9704"/>
        <dbReference type="ChEBI" id="CHEBI:15378"/>
        <dbReference type="ChEBI" id="CHEBI:30616"/>
        <dbReference type="ChEBI" id="CHEBI:33019"/>
        <dbReference type="ChEBI" id="CHEBI:57926"/>
        <dbReference type="ChEBI" id="CHEBI:78442"/>
        <dbReference type="ChEBI" id="CHEBI:78534"/>
        <dbReference type="ChEBI" id="CHEBI:456215"/>
        <dbReference type="EC" id="6.1.1.3"/>
    </reaction>
</comment>
<comment type="cofactor">
    <cofactor evidence="1">
        <name>Zn(2+)</name>
        <dbReference type="ChEBI" id="CHEBI:29105"/>
    </cofactor>
    <text evidence="1">Binds 1 zinc ion per subunit.</text>
</comment>
<comment type="subunit">
    <text evidence="1">Homodimer.</text>
</comment>
<comment type="subcellular location">
    <subcellularLocation>
        <location evidence="1">Cytoplasm</location>
    </subcellularLocation>
</comment>
<comment type="similarity">
    <text evidence="1">Belongs to the class-II aminoacyl-tRNA synthetase family.</text>
</comment>
<feature type="chain" id="PRO_1000020543" description="Threonine--tRNA ligase">
    <location>
        <begin position="1"/>
        <end position="659"/>
    </location>
</feature>
<feature type="domain" description="TGS" evidence="2">
    <location>
        <begin position="1"/>
        <end position="61"/>
    </location>
</feature>
<feature type="region of interest" description="Catalytic" evidence="1">
    <location>
        <begin position="260"/>
        <end position="555"/>
    </location>
</feature>
<feature type="binding site" evidence="1">
    <location>
        <position position="353"/>
    </location>
    <ligand>
        <name>Zn(2+)</name>
        <dbReference type="ChEBI" id="CHEBI:29105"/>
    </ligand>
</feature>
<feature type="binding site" evidence="1">
    <location>
        <position position="404"/>
    </location>
    <ligand>
        <name>Zn(2+)</name>
        <dbReference type="ChEBI" id="CHEBI:29105"/>
    </ligand>
</feature>
<feature type="binding site" evidence="1">
    <location>
        <position position="532"/>
    </location>
    <ligand>
        <name>Zn(2+)</name>
        <dbReference type="ChEBI" id="CHEBI:29105"/>
    </ligand>
</feature>
<organism>
    <name type="scientific">Thermobifida fusca (strain YX)</name>
    <dbReference type="NCBI Taxonomy" id="269800"/>
    <lineage>
        <taxon>Bacteria</taxon>
        <taxon>Bacillati</taxon>
        <taxon>Actinomycetota</taxon>
        <taxon>Actinomycetes</taxon>
        <taxon>Streptosporangiales</taxon>
        <taxon>Nocardiopsidaceae</taxon>
        <taxon>Thermobifida</taxon>
    </lineage>
</organism>
<evidence type="ECO:0000255" key="1">
    <source>
        <dbReference type="HAMAP-Rule" id="MF_00184"/>
    </source>
</evidence>
<evidence type="ECO:0000255" key="2">
    <source>
        <dbReference type="PROSITE-ProRule" id="PRU01228"/>
    </source>
</evidence>
<accession>Q47N28</accession>